<keyword id="KW-0150">Chloroplast</keyword>
<keyword id="KW-0934">Plastid</keyword>
<keyword id="KW-0687">Ribonucleoprotein</keyword>
<keyword id="KW-0689">Ribosomal protein</keyword>
<keyword id="KW-0694">RNA-binding</keyword>
<keyword id="KW-0699">rRNA-binding</keyword>
<name>RR7_SAGLA</name>
<evidence type="ECO:0000250" key="1"/>
<evidence type="ECO:0000305" key="2"/>
<organism>
    <name type="scientific">Sagittaria latifolia</name>
    <name type="common">Broadleaf arrowhead</name>
    <name type="synonym">Sagittaria chinensis</name>
    <dbReference type="NCBI Taxonomy" id="15008"/>
    <lineage>
        <taxon>Eukaryota</taxon>
        <taxon>Viridiplantae</taxon>
        <taxon>Streptophyta</taxon>
        <taxon>Embryophyta</taxon>
        <taxon>Tracheophyta</taxon>
        <taxon>Spermatophyta</taxon>
        <taxon>Magnoliopsida</taxon>
        <taxon>Liliopsida</taxon>
        <taxon>Alismataceae</taxon>
        <taxon>Sagittaria</taxon>
    </lineage>
</organism>
<sequence length="155" mass="17269">MSRRGTAKGKTAKYDPIYRNRLVNMLVNRILKHGKKALAYKILYGAVKKIQQNTKTNPLSILRQAIRGVTPDIAVKARRKSGSTRQVPIEIGSTQGKTLAIRWLLGASRKRPGQNMAFKLSSELVDAAKGRGGAIRKKEETIKMAEANRAFAHFR</sequence>
<geneLocation type="chloroplast"/>
<protein>
    <recommendedName>
        <fullName evidence="2">Small ribosomal subunit protein uS7c</fullName>
    </recommendedName>
    <alternativeName>
        <fullName>30S ribosomal protein S7, chloroplastic</fullName>
    </alternativeName>
</protein>
<dbReference type="EMBL" id="AF238074">
    <property type="protein sequence ID" value="AAQ14227.1"/>
    <property type="molecule type" value="Genomic_DNA"/>
</dbReference>
<dbReference type="SMR" id="Q6KGW7"/>
<dbReference type="GO" id="GO:0009507">
    <property type="term" value="C:chloroplast"/>
    <property type="evidence" value="ECO:0007669"/>
    <property type="project" value="UniProtKB-SubCell"/>
</dbReference>
<dbReference type="GO" id="GO:0015935">
    <property type="term" value="C:small ribosomal subunit"/>
    <property type="evidence" value="ECO:0007669"/>
    <property type="project" value="InterPro"/>
</dbReference>
<dbReference type="GO" id="GO:0019843">
    <property type="term" value="F:rRNA binding"/>
    <property type="evidence" value="ECO:0007669"/>
    <property type="project" value="UniProtKB-UniRule"/>
</dbReference>
<dbReference type="GO" id="GO:0003735">
    <property type="term" value="F:structural constituent of ribosome"/>
    <property type="evidence" value="ECO:0007669"/>
    <property type="project" value="InterPro"/>
</dbReference>
<dbReference type="GO" id="GO:0006412">
    <property type="term" value="P:translation"/>
    <property type="evidence" value="ECO:0007669"/>
    <property type="project" value="UniProtKB-UniRule"/>
</dbReference>
<dbReference type="CDD" id="cd14871">
    <property type="entry name" value="uS7_Chloroplast"/>
    <property type="match status" value="1"/>
</dbReference>
<dbReference type="FunFam" id="1.10.455.10:FF:000001">
    <property type="entry name" value="30S ribosomal protein S7"/>
    <property type="match status" value="1"/>
</dbReference>
<dbReference type="Gene3D" id="1.10.455.10">
    <property type="entry name" value="Ribosomal protein S7 domain"/>
    <property type="match status" value="1"/>
</dbReference>
<dbReference type="HAMAP" id="MF_00480_B">
    <property type="entry name" value="Ribosomal_uS7_B"/>
    <property type="match status" value="1"/>
</dbReference>
<dbReference type="InterPro" id="IPR000235">
    <property type="entry name" value="Ribosomal_uS7"/>
</dbReference>
<dbReference type="InterPro" id="IPR005717">
    <property type="entry name" value="Ribosomal_uS7_bac/org-type"/>
</dbReference>
<dbReference type="InterPro" id="IPR020606">
    <property type="entry name" value="Ribosomal_uS7_CS"/>
</dbReference>
<dbReference type="InterPro" id="IPR023798">
    <property type="entry name" value="Ribosomal_uS7_dom"/>
</dbReference>
<dbReference type="InterPro" id="IPR036823">
    <property type="entry name" value="Ribosomal_uS7_dom_sf"/>
</dbReference>
<dbReference type="NCBIfam" id="TIGR01029">
    <property type="entry name" value="rpsG_bact"/>
    <property type="match status" value="1"/>
</dbReference>
<dbReference type="PANTHER" id="PTHR11205">
    <property type="entry name" value="RIBOSOMAL PROTEIN S7"/>
    <property type="match status" value="1"/>
</dbReference>
<dbReference type="Pfam" id="PF00177">
    <property type="entry name" value="Ribosomal_S7"/>
    <property type="match status" value="1"/>
</dbReference>
<dbReference type="PIRSF" id="PIRSF002122">
    <property type="entry name" value="RPS7p_RPS7a_RPS5e_RPS7o"/>
    <property type="match status" value="1"/>
</dbReference>
<dbReference type="SUPFAM" id="SSF47973">
    <property type="entry name" value="Ribosomal protein S7"/>
    <property type="match status" value="1"/>
</dbReference>
<dbReference type="PROSITE" id="PS00052">
    <property type="entry name" value="RIBOSOMAL_S7"/>
    <property type="match status" value="1"/>
</dbReference>
<reference key="1">
    <citation type="submission" date="2000-02" db="EMBL/GenBank/DDBJ databases">
        <title>Long branches in the seed plants and the root of the angiosperms.</title>
        <authorList>
            <person name="Graham S.W."/>
            <person name="Reeves P.A."/>
            <person name="Burns A."/>
            <person name="Olmstead R.G."/>
        </authorList>
    </citation>
    <scope>NUCLEOTIDE SEQUENCE [GENOMIC DNA]</scope>
</reference>
<feature type="chain" id="PRO_0000124498" description="Small ribosomal subunit protein uS7c">
    <location>
        <begin position="1"/>
        <end position="155"/>
    </location>
</feature>
<comment type="function">
    <text evidence="1">One of the primary rRNA binding proteins, it binds directly to 16S rRNA where it nucleates assembly of the head domain of the 30S subunit.</text>
</comment>
<comment type="subunit">
    <text>Part of the 30S ribosomal subunit.</text>
</comment>
<comment type="subcellular location">
    <subcellularLocation>
        <location>Plastid</location>
        <location>Chloroplast</location>
    </subcellularLocation>
</comment>
<comment type="similarity">
    <text evidence="2">Belongs to the universal ribosomal protein uS7 family.</text>
</comment>
<proteinExistence type="inferred from homology"/>
<accession>Q6KGW7</accession>
<gene>
    <name type="primary">rps7</name>
</gene>